<keyword id="KW-0998">Cell outer membrane</keyword>
<keyword id="KW-0472">Membrane</keyword>
<keyword id="KW-0732">Signal</keyword>
<keyword id="KW-0812">Transmembrane</keyword>
<keyword id="KW-1134">Transmembrane beta strand</keyword>
<dbReference type="EMBL" id="Z18934">
    <property type="protein sequence ID" value="CAA79367.1"/>
    <property type="molecule type" value="Genomic_DNA"/>
</dbReference>
<dbReference type="PIR" id="S36342">
    <property type="entry name" value="S36342"/>
</dbReference>
<dbReference type="SMR" id="Q04879"/>
<dbReference type="Reactome" id="R-HSA-202733">
    <property type="pathway name" value="Cell surface interactions at the vascular wall"/>
</dbReference>
<dbReference type="GO" id="GO:0009279">
    <property type="term" value="C:cell outer membrane"/>
    <property type="evidence" value="ECO:0000304"/>
    <property type="project" value="Reactome"/>
</dbReference>
<dbReference type="GO" id="GO:0015288">
    <property type="term" value="F:porin activity"/>
    <property type="evidence" value="ECO:0007669"/>
    <property type="project" value="InterPro"/>
</dbReference>
<dbReference type="FunFam" id="2.40.160.20:FF:000005">
    <property type="entry name" value="Opacity protein opA54"/>
    <property type="match status" value="1"/>
</dbReference>
<dbReference type="Gene3D" id="2.40.160.20">
    <property type="match status" value="1"/>
</dbReference>
<dbReference type="InterPro" id="IPR011250">
    <property type="entry name" value="OMP/PagP_b-brl"/>
</dbReference>
<dbReference type="InterPro" id="IPR003394">
    <property type="entry name" value="Porin_opacity"/>
</dbReference>
<dbReference type="Pfam" id="PF02462">
    <property type="entry name" value="Opacity"/>
    <property type="match status" value="1"/>
</dbReference>
<dbReference type="SUPFAM" id="SSF56925">
    <property type="entry name" value="OMPA-like"/>
    <property type="match status" value="1"/>
</dbReference>
<comment type="function">
    <text>Implicated in a number of adherence functions. OPA proteins are implicated in pathogenesis and are subject to phase variation.</text>
</comment>
<comment type="subcellular location">
    <subcellularLocation>
        <location>Cell outer membrane</location>
    </subcellularLocation>
</comment>
<comment type="similarity">
    <text evidence="2">Belongs to the opacity porin family.</text>
</comment>
<evidence type="ECO:0000255" key="1"/>
<evidence type="ECO:0000305" key="2"/>
<gene>
    <name type="primary">opaF</name>
</gene>
<name>OPAF_NEIGO</name>
<protein>
    <recommendedName>
        <fullName>Opacity protein opA56</fullName>
    </recommendedName>
</protein>
<sequence length="234" mass="26868">AGEDHGRGPYVQADLAYAYEHITHDYPEQTGTKKDKISTVSDYFRNVRTHSIHPRVSVGYDFGGWRIAADYARYRKWNDDKYSVDIKELENKNQNKRDLKTENQENGTFHAVSSLGLSAVYDFKLNDKFKPYIGARVAYGHVRHSIDSTKKTTKFLTSSYGGLNPTVYTEENTQNAHHQSNSIRRVGLGVIAGVGFDITPKLTLDTGYRYHYWGRLENTRFKTHEASLGVRYRF</sequence>
<reference key="1">
    <citation type="journal article" date="1993" name="EMBO J.">
        <title>Variable opacity (Opa) outer membrane proteins account for the cell tropisms displayed by Neisseria gonorrhoeae for human leukocytes and epithelial cells.</title>
        <authorList>
            <person name="Kupsch E.-M."/>
            <person name="Knepper B."/>
            <person name="Kuroki T."/>
            <person name="Heuer I."/>
            <person name="Meyer T.F."/>
        </authorList>
    </citation>
    <scope>NUCLEOTIDE SEQUENCE [GENOMIC DNA]</scope>
    <source>
        <strain>MS11 / F3</strain>
    </source>
</reference>
<accession>Q04879</accession>
<proteinExistence type="inferred from homology"/>
<organism>
    <name type="scientific">Neisseria gonorrhoeae</name>
    <dbReference type="NCBI Taxonomy" id="485"/>
    <lineage>
        <taxon>Bacteria</taxon>
        <taxon>Pseudomonadati</taxon>
        <taxon>Pseudomonadota</taxon>
        <taxon>Betaproteobacteria</taxon>
        <taxon>Neisseriales</taxon>
        <taxon>Neisseriaceae</taxon>
        <taxon>Neisseria</taxon>
    </lineage>
</organism>
<feature type="signal peptide" evidence="1">
    <location>
        <begin position="1" status="less than"/>
        <end position="1"/>
    </location>
</feature>
<feature type="chain" id="PRO_0000021910" description="Opacity protein opA56">
    <location>
        <begin position="2"/>
        <end position="234" status="greater than"/>
    </location>
</feature>
<feature type="non-terminal residue">
    <location>
        <position position="1"/>
    </location>
</feature>
<feature type="non-terminal residue">
    <location>
        <position position="234"/>
    </location>
</feature>